<name>Y004_NPVAC</name>
<protein>
    <recommendedName>
        <fullName>Uncharacterized 17.6 kDa protein in CTL-LEF2 intergenic region</fullName>
    </recommendedName>
    <alternativeName>
        <fullName>ORF4</fullName>
    </alternativeName>
</protein>
<reference key="1">
    <citation type="journal article" date="1991" name="Virology">
        <title>Nucleotide sequence of the Autographa californica nuclear polyhedrosis 9.4 kbp EcoRI-I and -R (polyhedrin gene) region.</title>
        <authorList>
            <person name="Possee R.D."/>
            <person name="Sun T.P."/>
            <person name="Howard S.C."/>
            <person name="Ayres M.D."/>
            <person name="Hill-Perkins M."/>
            <person name="Gearing K.L."/>
        </authorList>
    </citation>
    <scope>NUCLEOTIDE SEQUENCE [GENOMIC DNA]</scope>
    <source>
        <strain>C6</strain>
    </source>
</reference>
<reference key="2">
    <citation type="journal article" date="1994" name="Virology">
        <title>The complete DNA sequence of Autographa californica nuclear polyhedrosis virus.</title>
        <authorList>
            <person name="Ayres M.D."/>
            <person name="Howard S.C."/>
            <person name="Kuzio J."/>
            <person name="Lopez-Ferber M."/>
            <person name="Possee R.D."/>
        </authorList>
    </citation>
    <scope>NUCLEOTIDE SEQUENCE [LARGE SCALE GENOMIC DNA]</scope>
    <source>
        <strain>C6</strain>
    </source>
</reference>
<reference key="3">
    <citation type="journal article" date="1991" name="J. Gen. Virol.">
        <title>Nucleotide sequence and transcript mapping of the HindIII F region of the Autographa californica nuclear polyhedrosis virus genome.</title>
        <authorList>
            <person name="Tilakaratne N."/>
            <person name="Hardin S.E."/>
            <person name="Weaver R.F."/>
        </authorList>
    </citation>
    <scope>NUCLEOTIDE SEQUENCE [GENOMIC DNA]</scope>
</reference>
<keyword id="KW-1185">Reference proteome</keyword>
<accession>P24654</accession>
<sequence>MKLTYKMASLLKYALRLTREYKENIIPHFDHLTRLRDLIDGMIKSEDVQRFNRTNRNDLISACMQINVRTYMPNATIDMRKQPNCIYFRICQYCHLEADVPSPDDHSVYRYLCVACGTPLVIDHPLDVFGHTEEGVNELLEVQRVNAGGEL</sequence>
<evidence type="ECO:0000305" key="1"/>
<organismHost>
    <name type="scientific">Lepidoptera</name>
    <name type="common">butterflies and moths</name>
    <dbReference type="NCBI Taxonomy" id="7088"/>
</organismHost>
<organism>
    <name type="scientific">Autographa californica nuclear polyhedrosis virus</name>
    <name type="common">AcMNPV</name>
    <dbReference type="NCBI Taxonomy" id="46015"/>
    <lineage>
        <taxon>Viruses</taxon>
        <taxon>Viruses incertae sedis</taxon>
        <taxon>Naldaviricetes</taxon>
        <taxon>Lefavirales</taxon>
        <taxon>Baculoviridae</taxon>
        <taxon>Alphabaculovirus</taxon>
        <taxon>Alphabaculovirus aucalifornicae</taxon>
    </lineage>
</organism>
<feature type="chain" id="PRO_0000132942" description="Uncharacterized 17.6 kDa protein in CTL-LEF2 intergenic region">
    <location>
        <begin position="1"/>
        <end position="151"/>
    </location>
</feature>
<feature type="sequence conflict" description="In Ref. 3." evidence="1" ref="3">
    <original>Y</original>
    <variation>V</variation>
    <location>
        <position position="87"/>
    </location>
</feature>
<feature type="sequence conflict" description="In Ref. 3." evidence="1" ref="3">
    <original>C</original>
    <variation>V</variation>
    <location>
        <position position="116"/>
    </location>
</feature>
<feature type="sequence conflict" description="In Ref. 3." evidence="1" ref="3">
    <original>PLVIDHPLDVFGHTEEGVNELLEVQRVNAGGEL</original>
    <variation>RGHRPPARRVRPHGGRRERTARGAASQRGRGVVGVITIY</variation>
    <location>
        <begin position="119"/>
        <end position="151"/>
    </location>
</feature>
<dbReference type="EMBL" id="M75679">
    <property type="status" value="NOT_ANNOTATED_CDS"/>
    <property type="molecule type" value="Genomic_DNA"/>
</dbReference>
<dbReference type="EMBL" id="L22858">
    <property type="protein sequence ID" value="AAA66634.1"/>
    <property type="molecule type" value="Genomic_DNA"/>
</dbReference>
<dbReference type="PIR" id="D72850">
    <property type="entry name" value="D72850"/>
</dbReference>
<dbReference type="RefSeq" id="NP_054033.1">
    <property type="nucleotide sequence ID" value="NC_001623.1"/>
</dbReference>
<dbReference type="GeneID" id="1403836"/>
<dbReference type="KEGG" id="vg:1403836"/>
<dbReference type="OrthoDB" id="14341at10239"/>
<dbReference type="Proteomes" id="UP000008292">
    <property type="component" value="Segment"/>
</dbReference>
<dbReference type="InterPro" id="IPR003225">
    <property type="entry name" value="DUF325"/>
</dbReference>
<dbReference type="Pfam" id="PF03804">
    <property type="entry name" value="DUF325"/>
    <property type="match status" value="1"/>
</dbReference>
<proteinExistence type="predicted"/>